<protein>
    <recommendedName>
        <fullName evidence="1">Large ribosomal subunit protein uL14</fullName>
    </recommendedName>
    <alternativeName>
        <fullName evidence="2">50S ribosomal protein L14</fullName>
    </alternativeName>
</protein>
<dbReference type="EMBL" id="CU207211">
    <property type="protein sequence ID" value="CAL63265.1"/>
    <property type="molecule type" value="Genomic_DNA"/>
</dbReference>
<dbReference type="SMR" id="A4G9S8"/>
<dbReference type="STRING" id="204773.HEAR3156"/>
<dbReference type="KEGG" id="har:HEAR3156"/>
<dbReference type="eggNOG" id="COG0093">
    <property type="taxonomic scope" value="Bacteria"/>
</dbReference>
<dbReference type="HOGENOM" id="CLU_095071_2_1_4"/>
<dbReference type="OrthoDB" id="9806379at2"/>
<dbReference type="Proteomes" id="UP000006697">
    <property type="component" value="Chromosome"/>
</dbReference>
<dbReference type="GO" id="GO:0022625">
    <property type="term" value="C:cytosolic large ribosomal subunit"/>
    <property type="evidence" value="ECO:0007669"/>
    <property type="project" value="TreeGrafter"/>
</dbReference>
<dbReference type="GO" id="GO:0070180">
    <property type="term" value="F:large ribosomal subunit rRNA binding"/>
    <property type="evidence" value="ECO:0007669"/>
    <property type="project" value="TreeGrafter"/>
</dbReference>
<dbReference type="GO" id="GO:0003735">
    <property type="term" value="F:structural constituent of ribosome"/>
    <property type="evidence" value="ECO:0007669"/>
    <property type="project" value="InterPro"/>
</dbReference>
<dbReference type="GO" id="GO:0006412">
    <property type="term" value="P:translation"/>
    <property type="evidence" value="ECO:0007669"/>
    <property type="project" value="UniProtKB-UniRule"/>
</dbReference>
<dbReference type="CDD" id="cd00337">
    <property type="entry name" value="Ribosomal_uL14"/>
    <property type="match status" value="1"/>
</dbReference>
<dbReference type="FunFam" id="2.40.150.20:FF:000001">
    <property type="entry name" value="50S ribosomal protein L14"/>
    <property type="match status" value="1"/>
</dbReference>
<dbReference type="Gene3D" id="2.40.150.20">
    <property type="entry name" value="Ribosomal protein L14"/>
    <property type="match status" value="1"/>
</dbReference>
<dbReference type="HAMAP" id="MF_01367">
    <property type="entry name" value="Ribosomal_uL14"/>
    <property type="match status" value="1"/>
</dbReference>
<dbReference type="InterPro" id="IPR000218">
    <property type="entry name" value="Ribosomal_uL14"/>
</dbReference>
<dbReference type="InterPro" id="IPR005745">
    <property type="entry name" value="Ribosomal_uL14_bac-type"/>
</dbReference>
<dbReference type="InterPro" id="IPR019972">
    <property type="entry name" value="Ribosomal_uL14_CS"/>
</dbReference>
<dbReference type="InterPro" id="IPR036853">
    <property type="entry name" value="Ribosomal_uL14_sf"/>
</dbReference>
<dbReference type="NCBIfam" id="TIGR01067">
    <property type="entry name" value="rplN_bact"/>
    <property type="match status" value="1"/>
</dbReference>
<dbReference type="PANTHER" id="PTHR11761">
    <property type="entry name" value="50S/60S RIBOSOMAL PROTEIN L14/L23"/>
    <property type="match status" value="1"/>
</dbReference>
<dbReference type="PANTHER" id="PTHR11761:SF3">
    <property type="entry name" value="LARGE RIBOSOMAL SUBUNIT PROTEIN UL14M"/>
    <property type="match status" value="1"/>
</dbReference>
<dbReference type="Pfam" id="PF00238">
    <property type="entry name" value="Ribosomal_L14"/>
    <property type="match status" value="1"/>
</dbReference>
<dbReference type="SMART" id="SM01374">
    <property type="entry name" value="Ribosomal_L14"/>
    <property type="match status" value="1"/>
</dbReference>
<dbReference type="SUPFAM" id="SSF50193">
    <property type="entry name" value="Ribosomal protein L14"/>
    <property type="match status" value="1"/>
</dbReference>
<dbReference type="PROSITE" id="PS00049">
    <property type="entry name" value="RIBOSOMAL_L14"/>
    <property type="match status" value="1"/>
</dbReference>
<comment type="function">
    <text evidence="1">Binds to 23S rRNA. Forms part of two intersubunit bridges in the 70S ribosome.</text>
</comment>
<comment type="subunit">
    <text evidence="1">Part of the 50S ribosomal subunit. Forms a cluster with proteins L3 and L19. In the 70S ribosome, L14 and L19 interact and together make contacts with the 16S rRNA in bridges B5 and B8.</text>
</comment>
<comment type="similarity">
    <text evidence="1">Belongs to the universal ribosomal protein uL14 family.</text>
</comment>
<name>RL14_HERAR</name>
<proteinExistence type="inferred from homology"/>
<keyword id="KW-1185">Reference proteome</keyword>
<keyword id="KW-0687">Ribonucleoprotein</keyword>
<keyword id="KW-0689">Ribosomal protein</keyword>
<keyword id="KW-0694">RNA-binding</keyword>
<keyword id="KW-0699">rRNA-binding</keyword>
<sequence>MIQTESRLEVADNTGAREVMCIKVLGGSKRRYAGIGDVIKVTVKVAAPRGRVKKGEIYNAVVVRTAKGVRRQDGSLVKFDSNAAVLLNAKLEPIGTRIFGPVTRELRTERFMKIVSLAPEVL</sequence>
<reference key="1">
    <citation type="journal article" date="2007" name="PLoS Genet.">
        <title>A tale of two oxidation states: bacterial colonization of arsenic-rich environments.</title>
        <authorList>
            <person name="Muller D."/>
            <person name="Medigue C."/>
            <person name="Koechler S."/>
            <person name="Barbe V."/>
            <person name="Barakat M."/>
            <person name="Talla E."/>
            <person name="Bonnefoy V."/>
            <person name="Krin E."/>
            <person name="Arsene-Ploetze F."/>
            <person name="Carapito C."/>
            <person name="Chandler M."/>
            <person name="Cournoyer B."/>
            <person name="Cruveiller S."/>
            <person name="Dossat C."/>
            <person name="Duval S."/>
            <person name="Heymann M."/>
            <person name="Leize E."/>
            <person name="Lieutaud A."/>
            <person name="Lievremont D."/>
            <person name="Makita Y."/>
            <person name="Mangenot S."/>
            <person name="Nitschke W."/>
            <person name="Ortet P."/>
            <person name="Perdrial N."/>
            <person name="Schoepp B."/>
            <person name="Siguier P."/>
            <person name="Simeonova D.D."/>
            <person name="Rouy Z."/>
            <person name="Segurens B."/>
            <person name="Turlin E."/>
            <person name="Vallenet D."/>
            <person name="van Dorsselaer A."/>
            <person name="Weiss S."/>
            <person name="Weissenbach J."/>
            <person name="Lett M.-C."/>
            <person name="Danchin A."/>
            <person name="Bertin P.N."/>
        </authorList>
    </citation>
    <scope>NUCLEOTIDE SEQUENCE [LARGE SCALE GENOMIC DNA]</scope>
    <source>
        <strain>ULPAs1</strain>
    </source>
</reference>
<feature type="chain" id="PRO_1000055596" description="Large ribosomal subunit protein uL14">
    <location>
        <begin position="1"/>
        <end position="122"/>
    </location>
</feature>
<accession>A4G9S8</accession>
<organism>
    <name type="scientific">Herminiimonas arsenicoxydans</name>
    <dbReference type="NCBI Taxonomy" id="204773"/>
    <lineage>
        <taxon>Bacteria</taxon>
        <taxon>Pseudomonadati</taxon>
        <taxon>Pseudomonadota</taxon>
        <taxon>Betaproteobacteria</taxon>
        <taxon>Burkholderiales</taxon>
        <taxon>Oxalobacteraceae</taxon>
        <taxon>Herminiimonas</taxon>
    </lineage>
</organism>
<gene>
    <name evidence="1" type="primary">rplN</name>
    <name type="ordered locus">HEAR3156</name>
</gene>
<evidence type="ECO:0000255" key="1">
    <source>
        <dbReference type="HAMAP-Rule" id="MF_01367"/>
    </source>
</evidence>
<evidence type="ECO:0000305" key="2"/>